<protein>
    <recommendedName>
        <fullName evidence="7">Zip homologous protein 4</fullName>
    </recommendedName>
</protein>
<comment type="function">
    <text evidence="3 4">Recruited co-dependently with zhp-3 to the synaptonemal complex between homologous chromosome pairs to regulate the formation and number of crossover events between homologs during meiotic recombination (PubMed:29521627, PubMed:30379819). In the early stages of pachytene, in complex with zhp-4, recruited by the zhp-1-zhp-2 heterodimer to designated crossover sites along the recombination intermediate to stabilize other pro-crossover factors such as rmh-1, msh-5 and cosa-1 (PubMed:29521627, PubMed:30379819). This in turn facilitates crossover and promotes the formation of chiasma in each meiotic nucleus at the late pachytene stage of meiosis (PubMed:29521627, PubMed:30379819). Negatively regulates double strand break formation to promote formation of the crossover intermediate (PubMed:30379819).</text>
</comment>
<comment type="subunit">
    <text evidence="3">Interacts with zhp-3; the interaction is required for their localization along paired chromosomes and stability, and for the formation of chiasma during meiotic recombination.</text>
</comment>
<comment type="subcellular location">
    <subcellularLocation>
        <location evidence="3 4">Chromosome</location>
    </subcellularLocation>
    <text evidence="3 4">Co-localizes with zhp-3 to chromosomes from mitosis to early diakinesis in the germline (PubMed:29521627, PubMed:30379819). Co-localizes with syp-1, a component of the synaptonemal complex from early prophase to mid-pachytene (PubMed:29521627, PubMed:30379819). At late pachytene, localization at chromosomes is not dependent on syp-1 (PubMed:29521627). From mid-pachytene, co-localizes with cosa-1 at crossover sites of recombination intermediates, and gradually disassociates from syp-1 along both chromosome arms (PubMed:29521627, PubMed:30379819).</text>
</comment>
<comment type="tissue specificity">
    <text evidence="3">Expressed in the germline.</text>
</comment>
<gene>
    <name evidence="7" type="primary">zhp-4</name>
    <name evidence="7" type="ORF">Y39B6A.16</name>
</gene>
<organism evidence="6">
    <name type="scientific">Caenorhabditis elegans</name>
    <dbReference type="NCBI Taxonomy" id="6239"/>
    <lineage>
        <taxon>Eukaryota</taxon>
        <taxon>Metazoa</taxon>
        <taxon>Ecdysozoa</taxon>
        <taxon>Nematoda</taxon>
        <taxon>Chromadorea</taxon>
        <taxon>Rhabditida</taxon>
        <taxon>Rhabditina</taxon>
        <taxon>Rhabditomorpha</taxon>
        <taxon>Rhabditoidea</taxon>
        <taxon>Rhabditidae</taxon>
        <taxon>Peloderinae</taxon>
        <taxon>Caenorhabditis</taxon>
    </lineage>
</organism>
<sequence>MEAVHCFRCYKFPSKQIEFYLTNCMHMFCIECERLCHPPEEEPLKCIQCSKTPIRIVKMGPELPMTIKSMFTPISEEINQYTRDLTRVLTFQHRQRASLSTFLERKVAAFDRLRDAYSEEKTKKEHYKKQLEEAYHLLKSKEHEISKLKKQLAEQAPPPQTPPRSNSLKVASSRSLETPSMMRVFSDSMYETPVQIQRRFTKAQAKAEAEAEAPAKSPGSKAQTTKCTSNYQSHPPASFETPIHHPPKTSMGFTTPANPPHMFPYLKKHEAQREKHKEHRNSQ</sequence>
<proteinExistence type="evidence at protein level"/>
<evidence type="ECO:0000255" key="1">
    <source>
        <dbReference type="PROSITE-ProRule" id="PRU00175"/>
    </source>
</evidence>
<evidence type="ECO:0000256" key="2">
    <source>
        <dbReference type="SAM" id="MobiDB-lite"/>
    </source>
</evidence>
<evidence type="ECO:0000269" key="3">
    <source>
    </source>
</evidence>
<evidence type="ECO:0000269" key="4">
    <source>
    </source>
</evidence>
<evidence type="ECO:0000305" key="5"/>
<evidence type="ECO:0000312" key="6">
    <source>
        <dbReference type="Proteomes" id="UP000001940"/>
    </source>
</evidence>
<evidence type="ECO:0000312" key="7">
    <source>
        <dbReference type="WormBase" id="Y39B6A.16"/>
    </source>
</evidence>
<reference evidence="6" key="1">
    <citation type="journal article" date="1998" name="Science">
        <title>Genome sequence of the nematode C. elegans: a platform for investigating biology.</title>
        <authorList>
            <consortium name="The C. elegans sequencing consortium"/>
        </authorList>
    </citation>
    <scope>NUCLEOTIDE SEQUENCE [LARGE SCALE GENOMIC DNA]</scope>
    <source>
        <strain evidence="6">Bristol N2</strain>
    </source>
</reference>
<reference evidence="5" key="2">
    <citation type="journal article" date="2018" name="Elife">
        <title>A compartmentalized signaling network mediates crossover control in meiosis.</title>
        <authorList>
            <person name="Zhang L."/>
            <person name="Koehler S."/>
            <person name="Rillo-Bohn R."/>
            <person name="Dernburg A.F."/>
        </authorList>
    </citation>
    <scope>FUNCTION</scope>
    <scope>INTERACTION WITH ZHP-3</scope>
    <scope>SUBCELLULAR LOCATION</scope>
    <scope>TISSUE SPECIFICITY</scope>
</reference>
<reference evidence="5" key="3">
    <citation type="journal article" date="2018" name="PLoS Genet.">
        <title>C. elegans ZHP-4 is required at multiple distinct steps in the formation of crossovers and their transition to segregation competent chiasmata.</title>
        <authorList>
            <person name="Nguyen H."/>
            <person name="Labella S."/>
            <person name="Silva N."/>
            <person name="Jantsch V."/>
            <person name="Zetka M."/>
        </authorList>
    </citation>
    <scope>FUNCTION</scope>
    <scope>SUBCELLULAR LOCATION</scope>
    <scope>MUTAGENESIS OF HIS-26; 56-ILE--GLN-286 AND 160-GLN--GLN-283</scope>
</reference>
<keyword id="KW-0158">Chromosome</keyword>
<keyword id="KW-0233">DNA recombination</keyword>
<keyword id="KW-0469">Meiosis</keyword>
<keyword id="KW-0479">Metal-binding</keyword>
<keyword id="KW-1185">Reference proteome</keyword>
<keyword id="KW-0862">Zinc</keyword>
<keyword id="KW-0863">Zinc-finger</keyword>
<feature type="chain" id="PRO_0000450698" description="Zip homologous protein 4">
    <location>
        <begin position="1"/>
        <end position="283"/>
    </location>
</feature>
<feature type="zinc finger region" description="RING-type" evidence="1">
    <location>
        <begin position="6"/>
        <end position="50"/>
    </location>
</feature>
<feature type="region of interest" description="Disordered" evidence="2">
    <location>
        <begin position="149"/>
        <end position="175"/>
    </location>
</feature>
<feature type="region of interest" description="Disordered" evidence="2">
    <location>
        <begin position="201"/>
        <end position="283"/>
    </location>
</feature>
<feature type="compositionally biased region" description="Polar residues" evidence="2">
    <location>
        <begin position="163"/>
        <end position="175"/>
    </location>
</feature>
<feature type="compositionally biased region" description="Low complexity" evidence="2">
    <location>
        <begin position="202"/>
        <end position="216"/>
    </location>
</feature>
<feature type="compositionally biased region" description="Polar residues" evidence="2">
    <location>
        <begin position="220"/>
        <end position="235"/>
    </location>
</feature>
<feature type="compositionally biased region" description="Basic and acidic residues" evidence="2">
    <location>
        <begin position="267"/>
        <end position="283"/>
    </location>
</feature>
<feature type="mutagenesis site" description="In vv138; 75% embryonic lethality and 35% of surviving progeny are male. Chromosome segregation defects due to impaired recruitment to the synaptonemal complex between homologous chromosome pairs during pachytene. Defective localization of the scaffolding protein rmh-1 and cosa-1 at crossover sites. Reduced number of crossovers that form are competent to initiate chromosome remodeling. 95% embryonic lethality, 43% of surviving progeny are male and abolished recruitment to chromosomes at any meiotic stage in a zhp-3 vv137 mutant background." evidence="4">
    <original>H</original>
    <variation>A</variation>
    <location>
        <position position="26"/>
    </location>
</feature>
<feature type="mutagenesis site" description="In vv103; 95% embryonic lethality and 35% of surviving progeny are male. Abolishes localization of zhp-3 to chromosomes throughout meiotic prophase and defective chiasmata formation during meiotic recombination. Impairs localization of rmh-1, msh-5 and cosa-1 at crossover sites resulting in defective crossovers and chromosome remodeling and segregation. Increased rad-51 positive nuclei at late pachytene indicative of increased double strand break formation. This is futher increased in a rad-54 RNAi-mediated knockdown background." evidence="4">
    <location>
        <begin position="56"/>
        <end position="283"/>
    </location>
</feature>
<feature type="mutagenesis site" description="In vv96; 95% embryonic lethality and 35% of surviving progeny are male. Defective chiasmata formation during meiotic recombination. Reduces localization of zhp-3 to chromosomes during late pachytene. Impairs localization of rmh-1, msh-5 and cosa-1 at crossover sites resulting in defective crossovers and chromosome remodeling and segregation. No bivalent chromosomes are formed at diakinesis in a rmh-1 jf92 mutant background." evidence="4">
    <location>
        <begin position="160"/>
        <end position="283"/>
    </location>
</feature>
<name>ZHP4_CAEEL</name>
<dbReference type="EMBL" id="BX284605">
    <property type="protein sequence ID" value="CAD31814.1"/>
    <property type="molecule type" value="Genomic_DNA"/>
</dbReference>
<dbReference type="RefSeq" id="NP_741682.1">
    <property type="nucleotide sequence ID" value="NM_171592.5"/>
</dbReference>
<dbReference type="SMR" id="Q8MYP1"/>
<dbReference type="ComplexPortal" id="CPX-5802">
    <property type="entry name" value="ZHP-3-ZHP-4 meiotic pro-crossover complex"/>
</dbReference>
<dbReference type="FunCoup" id="Q8MYP1">
    <property type="interactions" value="5"/>
</dbReference>
<dbReference type="IntAct" id="Q8MYP1">
    <property type="interactions" value="2"/>
</dbReference>
<dbReference type="STRING" id="6239.Y39B6A.16.1"/>
<dbReference type="PaxDb" id="6239-Y39B6A.16"/>
<dbReference type="EnsemblMetazoa" id="Y39B6A.16.1">
    <property type="protein sequence ID" value="Y39B6A.16.1"/>
    <property type="gene ID" value="WBGene00012678"/>
</dbReference>
<dbReference type="GeneID" id="3565475"/>
<dbReference type="KEGG" id="cel:CELE_Y39B6A.16"/>
<dbReference type="UCSC" id="Y39B6A.16">
    <property type="organism name" value="c. elegans"/>
</dbReference>
<dbReference type="AGR" id="WB:WBGene00012678"/>
<dbReference type="CTD" id="3565475"/>
<dbReference type="WormBase" id="Y39B6A.16">
    <property type="protein sequence ID" value="CE29858"/>
    <property type="gene ID" value="WBGene00012678"/>
    <property type="gene designation" value="zhp-4"/>
</dbReference>
<dbReference type="eggNOG" id="KOG4739">
    <property type="taxonomic scope" value="Eukaryota"/>
</dbReference>
<dbReference type="GeneTree" id="ENSGT00740000115581"/>
<dbReference type="HOGENOM" id="CLU_1166772_0_0_1"/>
<dbReference type="InParanoid" id="Q8MYP1"/>
<dbReference type="OMA" id="PANPPHM"/>
<dbReference type="OrthoDB" id="2535391at2759"/>
<dbReference type="PhylomeDB" id="Q8MYP1"/>
<dbReference type="PRO" id="PR:Q8MYP1"/>
<dbReference type="Proteomes" id="UP000001940">
    <property type="component" value="Chromosome V"/>
</dbReference>
<dbReference type="Bgee" id="WBGene00012678">
    <property type="expression patterns" value="Expressed in germ line (C elegans) and 3 other cell types or tissues"/>
</dbReference>
<dbReference type="GO" id="GO:0005694">
    <property type="term" value="C:chromosome"/>
    <property type="evidence" value="ECO:0000303"/>
    <property type="project" value="ComplexPortal"/>
</dbReference>
<dbReference type="GO" id="GO:0000795">
    <property type="term" value="C:synaptonemal complex"/>
    <property type="evidence" value="ECO:0000318"/>
    <property type="project" value="GO_Central"/>
</dbReference>
<dbReference type="GO" id="GO:0019789">
    <property type="term" value="F:SUMO transferase activity"/>
    <property type="evidence" value="ECO:0000318"/>
    <property type="project" value="GO_Central"/>
</dbReference>
<dbReference type="GO" id="GO:0008270">
    <property type="term" value="F:zinc ion binding"/>
    <property type="evidence" value="ECO:0007669"/>
    <property type="project" value="UniProtKB-KW"/>
</dbReference>
<dbReference type="GO" id="GO:0051026">
    <property type="term" value="P:chiasma assembly"/>
    <property type="evidence" value="ECO:0000303"/>
    <property type="project" value="ComplexPortal"/>
</dbReference>
<dbReference type="GO" id="GO:0007129">
    <property type="term" value="P:homologous chromosome pairing at meiosis"/>
    <property type="evidence" value="ECO:0000318"/>
    <property type="project" value="GO_Central"/>
</dbReference>
<dbReference type="GO" id="GO:0045132">
    <property type="term" value="P:meiotic chromosome segregation"/>
    <property type="evidence" value="ECO:0000303"/>
    <property type="project" value="ComplexPortal"/>
</dbReference>
<dbReference type="GO" id="GO:0007131">
    <property type="term" value="P:reciprocal meiotic recombination"/>
    <property type="evidence" value="ECO:0000303"/>
    <property type="project" value="ComplexPortal"/>
</dbReference>
<dbReference type="InterPro" id="IPR042123">
    <property type="entry name" value="Zip3/RNF212-like"/>
</dbReference>
<dbReference type="PANTHER" id="PTHR22663">
    <property type="entry name" value="RING FINGER PROTEIN NARYA-RELATED"/>
    <property type="match status" value="1"/>
</dbReference>
<dbReference type="PANTHER" id="PTHR22663:SF30">
    <property type="entry name" value="ZIP HOMOLOGOUS PROTEIN 4"/>
    <property type="match status" value="1"/>
</dbReference>
<accession>Q8MYP1</accession>